<dbReference type="EC" id="1.11.1.21" evidence="1"/>
<dbReference type="EMBL" id="AM747720">
    <property type="protein sequence ID" value="CAR53623.1"/>
    <property type="molecule type" value="Genomic_DNA"/>
</dbReference>
<dbReference type="SMR" id="B4EE21"/>
<dbReference type="KEGG" id="bcj:BCAL3299"/>
<dbReference type="eggNOG" id="COG0376">
    <property type="taxonomic scope" value="Bacteria"/>
</dbReference>
<dbReference type="HOGENOM" id="CLU_025424_2_0_4"/>
<dbReference type="BioCyc" id="BCEN216591:G1G1V-3675-MONOMER"/>
<dbReference type="Proteomes" id="UP000001035">
    <property type="component" value="Chromosome 1"/>
</dbReference>
<dbReference type="GO" id="GO:0005829">
    <property type="term" value="C:cytosol"/>
    <property type="evidence" value="ECO:0007669"/>
    <property type="project" value="TreeGrafter"/>
</dbReference>
<dbReference type="GO" id="GO:0004096">
    <property type="term" value="F:catalase activity"/>
    <property type="evidence" value="ECO:0007669"/>
    <property type="project" value="UniProtKB-UniRule"/>
</dbReference>
<dbReference type="GO" id="GO:0020037">
    <property type="term" value="F:heme binding"/>
    <property type="evidence" value="ECO:0007669"/>
    <property type="project" value="InterPro"/>
</dbReference>
<dbReference type="GO" id="GO:0046872">
    <property type="term" value="F:metal ion binding"/>
    <property type="evidence" value="ECO:0007669"/>
    <property type="project" value="UniProtKB-KW"/>
</dbReference>
<dbReference type="GO" id="GO:0070301">
    <property type="term" value="P:cellular response to hydrogen peroxide"/>
    <property type="evidence" value="ECO:0007669"/>
    <property type="project" value="TreeGrafter"/>
</dbReference>
<dbReference type="GO" id="GO:0042744">
    <property type="term" value="P:hydrogen peroxide catabolic process"/>
    <property type="evidence" value="ECO:0007669"/>
    <property type="project" value="UniProtKB-KW"/>
</dbReference>
<dbReference type="CDD" id="cd00649">
    <property type="entry name" value="catalase_peroxidase_1"/>
    <property type="match status" value="1"/>
</dbReference>
<dbReference type="CDD" id="cd08200">
    <property type="entry name" value="catalase_peroxidase_2"/>
    <property type="match status" value="1"/>
</dbReference>
<dbReference type="FunFam" id="1.10.420.10:FF:000002">
    <property type="entry name" value="Catalase-peroxidase"/>
    <property type="match status" value="1"/>
</dbReference>
<dbReference type="FunFam" id="1.10.420.10:FF:000004">
    <property type="entry name" value="Catalase-peroxidase"/>
    <property type="match status" value="1"/>
</dbReference>
<dbReference type="FunFam" id="1.10.520.10:FF:000002">
    <property type="entry name" value="Catalase-peroxidase"/>
    <property type="match status" value="1"/>
</dbReference>
<dbReference type="FunFam" id="1.10.520.10:FF:000004">
    <property type="entry name" value="Catalase-peroxidase"/>
    <property type="match status" value="1"/>
</dbReference>
<dbReference type="Gene3D" id="1.10.520.10">
    <property type="match status" value="2"/>
</dbReference>
<dbReference type="Gene3D" id="1.10.420.10">
    <property type="entry name" value="Peroxidase, domain 2"/>
    <property type="match status" value="2"/>
</dbReference>
<dbReference type="HAMAP" id="MF_01961">
    <property type="entry name" value="Catal_peroxid"/>
    <property type="match status" value="1"/>
</dbReference>
<dbReference type="InterPro" id="IPR000763">
    <property type="entry name" value="Catalase_peroxidase"/>
</dbReference>
<dbReference type="InterPro" id="IPR002016">
    <property type="entry name" value="Haem_peroxidase"/>
</dbReference>
<dbReference type="InterPro" id="IPR010255">
    <property type="entry name" value="Haem_peroxidase_sf"/>
</dbReference>
<dbReference type="InterPro" id="IPR019794">
    <property type="entry name" value="Peroxidases_AS"/>
</dbReference>
<dbReference type="InterPro" id="IPR019793">
    <property type="entry name" value="Peroxidases_heam-ligand_BS"/>
</dbReference>
<dbReference type="NCBIfam" id="TIGR00198">
    <property type="entry name" value="cat_per_HPI"/>
    <property type="match status" value="1"/>
</dbReference>
<dbReference type="NCBIfam" id="NF011635">
    <property type="entry name" value="PRK15061.1"/>
    <property type="match status" value="1"/>
</dbReference>
<dbReference type="PANTHER" id="PTHR30555:SF0">
    <property type="entry name" value="CATALASE-PEROXIDASE"/>
    <property type="match status" value="1"/>
</dbReference>
<dbReference type="PANTHER" id="PTHR30555">
    <property type="entry name" value="HYDROPEROXIDASE I, BIFUNCTIONAL CATALASE-PEROXIDASE"/>
    <property type="match status" value="1"/>
</dbReference>
<dbReference type="Pfam" id="PF00141">
    <property type="entry name" value="peroxidase"/>
    <property type="match status" value="2"/>
</dbReference>
<dbReference type="PRINTS" id="PR00460">
    <property type="entry name" value="BPEROXIDASE"/>
</dbReference>
<dbReference type="PRINTS" id="PR00458">
    <property type="entry name" value="PEROXIDASE"/>
</dbReference>
<dbReference type="SUPFAM" id="SSF48113">
    <property type="entry name" value="Heme-dependent peroxidases"/>
    <property type="match status" value="2"/>
</dbReference>
<dbReference type="PROSITE" id="PS00435">
    <property type="entry name" value="PEROXIDASE_1"/>
    <property type="match status" value="1"/>
</dbReference>
<dbReference type="PROSITE" id="PS00436">
    <property type="entry name" value="PEROXIDASE_2"/>
    <property type="match status" value="1"/>
</dbReference>
<dbReference type="PROSITE" id="PS50873">
    <property type="entry name" value="PEROXIDASE_4"/>
    <property type="match status" value="1"/>
</dbReference>
<protein>
    <recommendedName>
        <fullName evidence="1">Catalase-peroxidase 1</fullName>
        <shortName evidence="1">CP 1</shortName>
        <ecNumber evidence="1">1.11.1.21</ecNumber>
    </recommendedName>
    <alternativeName>
        <fullName evidence="1">Peroxidase/catalase 1</fullName>
    </alternativeName>
</protein>
<accession>B4EE21</accession>
<reference key="1">
    <citation type="journal article" date="2009" name="J. Bacteriol.">
        <title>The genome of Burkholderia cenocepacia J2315, an epidemic pathogen of cystic fibrosis patients.</title>
        <authorList>
            <person name="Holden M.T."/>
            <person name="Seth-Smith H.M."/>
            <person name="Crossman L.C."/>
            <person name="Sebaihia M."/>
            <person name="Bentley S.D."/>
            <person name="Cerdeno-Tarraga A.M."/>
            <person name="Thomson N.R."/>
            <person name="Bason N."/>
            <person name="Quail M.A."/>
            <person name="Sharp S."/>
            <person name="Cherevach I."/>
            <person name="Churcher C."/>
            <person name="Goodhead I."/>
            <person name="Hauser H."/>
            <person name="Holroyd N."/>
            <person name="Mungall K."/>
            <person name="Scott P."/>
            <person name="Walker D."/>
            <person name="White B."/>
            <person name="Rose H."/>
            <person name="Iversen P."/>
            <person name="Mil-Homens D."/>
            <person name="Rocha E.P."/>
            <person name="Fialho A.M."/>
            <person name="Baldwin A."/>
            <person name="Dowson C."/>
            <person name="Barrell B.G."/>
            <person name="Govan J.R."/>
            <person name="Vandamme P."/>
            <person name="Hart C.A."/>
            <person name="Mahenthiralingam E."/>
            <person name="Parkhill J."/>
        </authorList>
    </citation>
    <scope>NUCLEOTIDE SEQUENCE [LARGE SCALE GENOMIC DNA]</scope>
    <source>
        <strain>ATCC BAA-245 / DSM 16553 / LMG 16656 / NCTC 13227 / J2315 / CF5610</strain>
    </source>
</reference>
<comment type="function">
    <text evidence="1">Bifunctional enzyme with both catalase and broad-spectrum peroxidase activity.</text>
</comment>
<comment type="catalytic activity">
    <reaction evidence="1">
        <text>H2O2 + AH2 = A + 2 H2O</text>
        <dbReference type="Rhea" id="RHEA:30275"/>
        <dbReference type="ChEBI" id="CHEBI:13193"/>
        <dbReference type="ChEBI" id="CHEBI:15377"/>
        <dbReference type="ChEBI" id="CHEBI:16240"/>
        <dbReference type="ChEBI" id="CHEBI:17499"/>
        <dbReference type="EC" id="1.11.1.21"/>
    </reaction>
</comment>
<comment type="catalytic activity">
    <reaction evidence="1">
        <text>2 H2O2 = O2 + 2 H2O</text>
        <dbReference type="Rhea" id="RHEA:20309"/>
        <dbReference type="ChEBI" id="CHEBI:15377"/>
        <dbReference type="ChEBI" id="CHEBI:15379"/>
        <dbReference type="ChEBI" id="CHEBI:16240"/>
        <dbReference type="EC" id="1.11.1.21"/>
    </reaction>
</comment>
<comment type="cofactor">
    <cofactor evidence="1">
        <name>heme b</name>
        <dbReference type="ChEBI" id="CHEBI:60344"/>
    </cofactor>
    <text evidence="1">Binds 1 heme b (iron(II)-protoporphyrin IX) group per dimer.</text>
</comment>
<comment type="subunit">
    <text evidence="1">Homodimer or homotetramer.</text>
</comment>
<comment type="PTM">
    <text evidence="1">Formation of the three residue Trp-Tyr-Met cross-link is important for the catalase, but not the peroxidase activity of the enzyme.</text>
</comment>
<comment type="similarity">
    <text evidence="1">Belongs to the peroxidase family. Peroxidase/catalase subfamily.</text>
</comment>
<evidence type="ECO:0000255" key="1">
    <source>
        <dbReference type="HAMAP-Rule" id="MF_01961"/>
    </source>
</evidence>
<feature type="chain" id="PRO_0000354739" description="Catalase-peroxidase 1">
    <location>
        <begin position="1"/>
        <end position="728"/>
    </location>
</feature>
<feature type="active site" description="Proton acceptor" evidence="1">
    <location>
        <position position="92"/>
    </location>
</feature>
<feature type="binding site" description="axial binding residue" evidence="1">
    <location>
        <position position="259"/>
    </location>
    <ligand>
        <name>heme b</name>
        <dbReference type="ChEBI" id="CHEBI:60344"/>
    </ligand>
    <ligandPart>
        <name>Fe</name>
        <dbReference type="ChEBI" id="CHEBI:18248"/>
    </ligandPart>
</feature>
<feature type="site" description="Transition state stabilizer" evidence="1">
    <location>
        <position position="88"/>
    </location>
</feature>
<feature type="cross-link" description="Tryptophyl-tyrosyl-methioninium (Trp-Tyr) (with M-244)" evidence="1">
    <location>
        <begin position="91"/>
        <end position="218"/>
    </location>
</feature>
<feature type="cross-link" description="Tryptophyl-tyrosyl-methioninium (Tyr-Met) (with W-91)" evidence="1">
    <location>
        <begin position="218"/>
        <end position="244"/>
    </location>
</feature>
<keyword id="KW-0349">Heme</keyword>
<keyword id="KW-0376">Hydrogen peroxide</keyword>
<keyword id="KW-0408">Iron</keyword>
<keyword id="KW-0479">Metal-binding</keyword>
<keyword id="KW-0560">Oxidoreductase</keyword>
<keyword id="KW-0575">Peroxidase</keyword>
<proteinExistence type="inferred from homology"/>
<gene>
    <name evidence="1" type="primary">katG1</name>
    <name type="synonym">katB</name>
    <name type="ordered locus">BceJ2315_32390</name>
    <name type="ORF">BCAL3299</name>
</gene>
<name>KATG1_BURCJ</name>
<sequence length="728" mass="79445">MSNETKCPFNHTAGSGTTNKDWWPNQLNLNVLHRHSALSDPMDPDFDYAEAFKKLDLAAVKQDLHALMTTSQDWWPADFGHYGGLFVRMAWHSAGTYRTADGRGGAGGGQQRFAPLNSWPDNVSLDKARRLLWPIKQKYGRNISWADLLILTGNVALESMGFKTFGYAGGRVDTWEPDDVYWGSEKIWLELSGGPNSRYTGKRELESPLAAVQMGLIYVNPEGPDGNPDPVAAAHDIRETFARMAMNDEETVALIAGGHTFGKTHGAGPASNVGPEPEAAGLEEQGLGWKSTFGTGKGKDTITSGLEVTWTSTPTKWSNDFFKHLFSYEWELTKSPAGAHQWVAKDADEVIPDAYDASKKHRPTMLTTDLSLRFDPAYEKISRRFYENPAEFADAFARAWFKLTHRDMGPRSRYLGPEVPAEHLLWQDPIPAVDHPLIDDADVAALKAKVLATGLSVSQLVSTAWASAATFRGSDKRGGANGARIRLAPQKDWEVNQPAALAAVLEALEGVQKAFNDAQTGGKKVSLADLIVLAGAAGVEQAAKNAGIAITVPFAPGRMDASQEETDVDAMAVLEPLADGFRNYLKHPYKTPAEALLVDKAQLLTLTAPEMTVLVGGLRVLGANVGDSKHGVFTDRPGTLSNDFFANLLDMRTEWKPVSAANDVFEGRDRATGAVKWTGTRVDLIFGSHSQLRALAEVYGSADAQEKFVRDFVAAWNKVMNLDRFDLA</sequence>
<organism>
    <name type="scientific">Burkholderia cenocepacia (strain ATCC BAA-245 / DSM 16553 / LMG 16656 / NCTC 13227 / J2315 / CF5610)</name>
    <name type="common">Burkholderia cepacia (strain J2315)</name>
    <dbReference type="NCBI Taxonomy" id="216591"/>
    <lineage>
        <taxon>Bacteria</taxon>
        <taxon>Pseudomonadati</taxon>
        <taxon>Pseudomonadota</taxon>
        <taxon>Betaproteobacteria</taxon>
        <taxon>Burkholderiales</taxon>
        <taxon>Burkholderiaceae</taxon>
        <taxon>Burkholderia</taxon>
        <taxon>Burkholderia cepacia complex</taxon>
    </lineage>
</organism>